<gene>
    <name evidence="1" type="primary">coq7</name>
    <name type="ordered locus">PsycPRwf_0926</name>
</gene>
<organism>
    <name type="scientific">Psychrobacter sp. (strain PRwf-1)</name>
    <dbReference type="NCBI Taxonomy" id="349106"/>
    <lineage>
        <taxon>Bacteria</taxon>
        <taxon>Pseudomonadati</taxon>
        <taxon>Pseudomonadota</taxon>
        <taxon>Gammaproteobacteria</taxon>
        <taxon>Moraxellales</taxon>
        <taxon>Moraxellaceae</taxon>
        <taxon>Psychrobacter</taxon>
    </lineage>
</organism>
<sequence>MAKNLSIIDRAIVGFDSSLRAIIPHSNQTARPLPVSSDALPQLSITESRHVAGLMRINHTGEVCAQGLYHGQAFTAKDDLVKQAMQHSADEEIDHLVWCETRLDELGSHPSVFTPVWYGLSFGLGAIAGIISDEFSLGFVAETEAQVSEHLQDHIDQLPEQDTRSKEILAQMNIEELEHREAALNHGGKALSAPVRISMRWMANRMKNLAYHL</sequence>
<name>COQ7_PSYWF</name>
<proteinExistence type="inferred from homology"/>
<feature type="chain" id="PRO_0000338724" description="3-demethoxyubiquinol 3-hydroxylase">
    <location>
        <begin position="1"/>
        <end position="213"/>
    </location>
</feature>
<feature type="binding site" evidence="1">
    <location>
        <position position="62"/>
    </location>
    <ligand>
        <name>Fe cation</name>
        <dbReference type="ChEBI" id="CHEBI:24875"/>
        <label>1</label>
    </ligand>
</feature>
<feature type="binding site" evidence="1">
    <location>
        <position position="92"/>
    </location>
    <ligand>
        <name>Fe cation</name>
        <dbReference type="ChEBI" id="CHEBI:24875"/>
        <label>1</label>
    </ligand>
</feature>
<feature type="binding site" evidence="1">
    <location>
        <position position="92"/>
    </location>
    <ligand>
        <name>Fe cation</name>
        <dbReference type="ChEBI" id="CHEBI:24875"/>
        <label>2</label>
    </ligand>
</feature>
<feature type="binding site" evidence="1">
    <location>
        <position position="95"/>
    </location>
    <ligand>
        <name>Fe cation</name>
        <dbReference type="ChEBI" id="CHEBI:24875"/>
        <label>1</label>
    </ligand>
</feature>
<feature type="binding site" evidence="1">
    <location>
        <position position="144"/>
    </location>
    <ligand>
        <name>Fe cation</name>
        <dbReference type="ChEBI" id="CHEBI:24875"/>
        <label>2</label>
    </ligand>
</feature>
<feature type="binding site" evidence="1">
    <location>
        <position position="176"/>
    </location>
    <ligand>
        <name>Fe cation</name>
        <dbReference type="ChEBI" id="CHEBI:24875"/>
        <label>1</label>
    </ligand>
</feature>
<feature type="binding site" evidence="1">
    <location>
        <position position="176"/>
    </location>
    <ligand>
        <name>Fe cation</name>
        <dbReference type="ChEBI" id="CHEBI:24875"/>
        <label>2</label>
    </ligand>
</feature>
<feature type="binding site" evidence="1">
    <location>
        <position position="179"/>
    </location>
    <ligand>
        <name>Fe cation</name>
        <dbReference type="ChEBI" id="CHEBI:24875"/>
        <label>2</label>
    </ligand>
</feature>
<keyword id="KW-1003">Cell membrane</keyword>
<keyword id="KW-0408">Iron</keyword>
<keyword id="KW-0472">Membrane</keyword>
<keyword id="KW-0479">Metal-binding</keyword>
<keyword id="KW-0503">Monooxygenase</keyword>
<keyword id="KW-0560">Oxidoreductase</keyword>
<keyword id="KW-0831">Ubiquinone biosynthesis</keyword>
<evidence type="ECO:0000255" key="1">
    <source>
        <dbReference type="HAMAP-Rule" id="MF_01658"/>
    </source>
</evidence>
<comment type="function">
    <text evidence="1">Catalyzes the hydroxylation of 2-nonaprenyl-3-methyl-6-methoxy-1,4-benzoquinol during ubiquinone biosynthesis.</text>
</comment>
<comment type="catalytic activity">
    <reaction evidence="1">
        <text>a 5-methoxy-2-methyl-3-(all-trans-polyprenyl)benzene-1,4-diol + AH2 + O2 = a 3-demethylubiquinol + A + H2O</text>
        <dbReference type="Rhea" id="RHEA:50908"/>
        <dbReference type="Rhea" id="RHEA-COMP:10859"/>
        <dbReference type="Rhea" id="RHEA-COMP:10914"/>
        <dbReference type="ChEBI" id="CHEBI:13193"/>
        <dbReference type="ChEBI" id="CHEBI:15377"/>
        <dbReference type="ChEBI" id="CHEBI:15379"/>
        <dbReference type="ChEBI" id="CHEBI:17499"/>
        <dbReference type="ChEBI" id="CHEBI:84167"/>
        <dbReference type="ChEBI" id="CHEBI:84422"/>
        <dbReference type="EC" id="1.14.99.60"/>
    </reaction>
</comment>
<comment type="cofactor">
    <cofactor evidence="1">
        <name>Fe cation</name>
        <dbReference type="ChEBI" id="CHEBI:24875"/>
    </cofactor>
    <text evidence="1">Binds 2 iron ions per subunit.</text>
</comment>
<comment type="pathway">
    <text evidence="1">Cofactor biosynthesis; ubiquinone biosynthesis.</text>
</comment>
<comment type="subcellular location">
    <subcellularLocation>
        <location evidence="1">Cell membrane</location>
        <topology evidence="1">Peripheral membrane protein</topology>
    </subcellularLocation>
</comment>
<comment type="similarity">
    <text evidence="1">Belongs to the COQ7 family.</text>
</comment>
<reference key="1">
    <citation type="submission" date="2007-05" db="EMBL/GenBank/DDBJ databases">
        <title>Complete sequence of chromosome of Psychrobacter sp. PRwf-1.</title>
        <authorList>
            <consortium name="US DOE Joint Genome Institute"/>
            <person name="Copeland A."/>
            <person name="Lucas S."/>
            <person name="Lapidus A."/>
            <person name="Barry K."/>
            <person name="Detter J.C."/>
            <person name="Glavina del Rio T."/>
            <person name="Hammon N."/>
            <person name="Israni S."/>
            <person name="Dalin E."/>
            <person name="Tice H."/>
            <person name="Pitluck S."/>
            <person name="Chain P."/>
            <person name="Malfatti S."/>
            <person name="Shin M."/>
            <person name="Vergez L."/>
            <person name="Schmutz J."/>
            <person name="Larimer F."/>
            <person name="Land M."/>
            <person name="Hauser L."/>
            <person name="Kyrpides N."/>
            <person name="Kim E."/>
            <person name="Tiedje J."/>
            <person name="Richardson P."/>
        </authorList>
    </citation>
    <scope>NUCLEOTIDE SEQUENCE [LARGE SCALE GENOMIC DNA]</scope>
    <source>
        <strain>PRwf-1</strain>
    </source>
</reference>
<protein>
    <recommendedName>
        <fullName evidence="1">3-demethoxyubiquinol 3-hydroxylase</fullName>
        <shortName evidence="1">DMQ hydroxylase</shortName>
        <ecNumber evidence="1">1.14.99.60</ecNumber>
    </recommendedName>
    <alternativeName>
        <fullName evidence="1">2-nonaprenyl-3-methyl-6-methoxy-1,4-benzoquinol hydroxylase</fullName>
    </alternativeName>
</protein>
<dbReference type="EC" id="1.14.99.60" evidence="1"/>
<dbReference type="EMBL" id="CP000713">
    <property type="protein sequence ID" value="ABQ93876.1"/>
    <property type="molecule type" value="Genomic_DNA"/>
</dbReference>
<dbReference type="SMR" id="A5WDY5"/>
<dbReference type="STRING" id="349106.PsycPRwf_0926"/>
<dbReference type="KEGG" id="prw:PsycPRwf_0926"/>
<dbReference type="eggNOG" id="COG2941">
    <property type="taxonomic scope" value="Bacteria"/>
</dbReference>
<dbReference type="HOGENOM" id="CLU_088601_0_0_6"/>
<dbReference type="UniPathway" id="UPA00232"/>
<dbReference type="GO" id="GO:0005886">
    <property type="term" value="C:plasma membrane"/>
    <property type="evidence" value="ECO:0007669"/>
    <property type="project" value="UniProtKB-SubCell"/>
</dbReference>
<dbReference type="GO" id="GO:0008682">
    <property type="term" value="F:3-demethoxyubiquinol 3-hydroxylase activity"/>
    <property type="evidence" value="ECO:0007669"/>
    <property type="project" value="UniProtKB-EC"/>
</dbReference>
<dbReference type="GO" id="GO:0046872">
    <property type="term" value="F:metal ion binding"/>
    <property type="evidence" value="ECO:0007669"/>
    <property type="project" value="UniProtKB-KW"/>
</dbReference>
<dbReference type="GO" id="GO:0006744">
    <property type="term" value="P:ubiquinone biosynthetic process"/>
    <property type="evidence" value="ECO:0007669"/>
    <property type="project" value="UniProtKB-UniRule"/>
</dbReference>
<dbReference type="CDD" id="cd01042">
    <property type="entry name" value="DMQH"/>
    <property type="match status" value="1"/>
</dbReference>
<dbReference type="Gene3D" id="1.20.1260.10">
    <property type="match status" value="1"/>
</dbReference>
<dbReference type="HAMAP" id="MF_01658">
    <property type="entry name" value="COQ7"/>
    <property type="match status" value="1"/>
</dbReference>
<dbReference type="InterPro" id="IPR047809">
    <property type="entry name" value="COQ7_proteobact"/>
</dbReference>
<dbReference type="InterPro" id="IPR012347">
    <property type="entry name" value="Ferritin-like"/>
</dbReference>
<dbReference type="InterPro" id="IPR009078">
    <property type="entry name" value="Ferritin-like_SF"/>
</dbReference>
<dbReference type="InterPro" id="IPR011566">
    <property type="entry name" value="Ubq_synth_Coq7"/>
</dbReference>
<dbReference type="NCBIfam" id="NF033656">
    <property type="entry name" value="DMQ_monoox_COQ7"/>
    <property type="match status" value="1"/>
</dbReference>
<dbReference type="PANTHER" id="PTHR11237:SF4">
    <property type="entry name" value="5-DEMETHOXYUBIQUINONE HYDROXYLASE, MITOCHONDRIAL"/>
    <property type="match status" value="1"/>
</dbReference>
<dbReference type="PANTHER" id="PTHR11237">
    <property type="entry name" value="COENZYME Q10 BIOSYNTHESIS PROTEIN 7"/>
    <property type="match status" value="1"/>
</dbReference>
<dbReference type="Pfam" id="PF03232">
    <property type="entry name" value="COQ7"/>
    <property type="match status" value="1"/>
</dbReference>
<dbReference type="SUPFAM" id="SSF47240">
    <property type="entry name" value="Ferritin-like"/>
    <property type="match status" value="1"/>
</dbReference>
<accession>A5WDY5</accession>